<dbReference type="EMBL" id="CP000687">
    <property type="protein sequence ID" value="ABY69954.1"/>
    <property type="molecule type" value="Genomic_DNA"/>
</dbReference>
<dbReference type="RefSeq" id="WP_012263203.1">
    <property type="nucleotide sequence ID" value="NC_010278.1"/>
</dbReference>
<dbReference type="SMR" id="B0BQW9"/>
<dbReference type="KEGG" id="apj:APJL_1398"/>
<dbReference type="HOGENOM" id="CLU_130694_3_0_6"/>
<dbReference type="Proteomes" id="UP000008547">
    <property type="component" value="Chromosome"/>
</dbReference>
<dbReference type="GO" id="GO:0005737">
    <property type="term" value="C:cytoplasm"/>
    <property type="evidence" value="ECO:0007669"/>
    <property type="project" value="TreeGrafter"/>
</dbReference>
<dbReference type="Gene3D" id="3.30.1200.10">
    <property type="entry name" value="YggU-like"/>
    <property type="match status" value="1"/>
</dbReference>
<dbReference type="HAMAP" id="MF_00634">
    <property type="entry name" value="UPF0235"/>
    <property type="match status" value="1"/>
</dbReference>
<dbReference type="InterPro" id="IPR003746">
    <property type="entry name" value="DUF167"/>
</dbReference>
<dbReference type="InterPro" id="IPR036591">
    <property type="entry name" value="YggU-like_sf"/>
</dbReference>
<dbReference type="NCBIfam" id="TIGR00251">
    <property type="entry name" value="DUF167 family protein"/>
    <property type="match status" value="1"/>
</dbReference>
<dbReference type="NCBIfam" id="NF003466">
    <property type="entry name" value="PRK05090.1"/>
    <property type="match status" value="1"/>
</dbReference>
<dbReference type="PANTHER" id="PTHR13420">
    <property type="entry name" value="UPF0235 PROTEIN C15ORF40"/>
    <property type="match status" value="1"/>
</dbReference>
<dbReference type="PANTHER" id="PTHR13420:SF7">
    <property type="entry name" value="UPF0235 PROTEIN C15ORF40"/>
    <property type="match status" value="1"/>
</dbReference>
<dbReference type="Pfam" id="PF02594">
    <property type="entry name" value="DUF167"/>
    <property type="match status" value="1"/>
</dbReference>
<dbReference type="SMART" id="SM01152">
    <property type="entry name" value="DUF167"/>
    <property type="match status" value="1"/>
</dbReference>
<dbReference type="SUPFAM" id="SSF69786">
    <property type="entry name" value="YggU-like"/>
    <property type="match status" value="1"/>
</dbReference>
<sequence length="98" mass="11061">MEAVERIENPYGIRLRIFLQPKASRDQIVGLHDSELKIAITAPPVDGAANAHLLKYLSKLFKVPKSSIVLEKGELQRHNKQLFVPEPKLIPKEIEALL</sequence>
<organism>
    <name type="scientific">Actinobacillus pleuropneumoniae serotype 3 (strain JL03)</name>
    <dbReference type="NCBI Taxonomy" id="434271"/>
    <lineage>
        <taxon>Bacteria</taxon>
        <taxon>Pseudomonadati</taxon>
        <taxon>Pseudomonadota</taxon>
        <taxon>Gammaproteobacteria</taxon>
        <taxon>Pasteurellales</taxon>
        <taxon>Pasteurellaceae</taxon>
        <taxon>Actinobacillus</taxon>
    </lineage>
</organism>
<feature type="chain" id="PRO_1000130669" description="UPF0235 protein APJL_1398">
    <location>
        <begin position="1"/>
        <end position="98"/>
    </location>
</feature>
<protein>
    <recommendedName>
        <fullName evidence="1">UPF0235 protein APJL_1398</fullName>
    </recommendedName>
</protein>
<proteinExistence type="inferred from homology"/>
<accession>B0BQW9</accession>
<comment type="similarity">
    <text evidence="1">Belongs to the UPF0235 family.</text>
</comment>
<reference key="1">
    <citation type="journal article" date="2008" name="PLoS ONE">
        <title>Genome biology of Actinobacillus pleuropneumoniae JL03, an isolate of serotype 3 prevalent in China.</title>
        <authorList>
            <person name="Xu Z."/>
            <person name="Zhou Y."/>
            <person name="Li L."/>
            <person name="Zhou R."/>
            <person name="Xiao S."/>
            <person name="Wan Y."/>
            <person name="Zhang S."/>
            <person name="Wang K."/>
            <person name="Li W."/>
            <person name="Li L."/>
            <person name="Jin H."/>
            <person name="Kang M."/>
            <person name="Dalai B."/>
            <person name="Li T."/>
            <person name="Liu L."/>
            <person name="Cheng Y."/>
            <person name="Zhang L."/>
            <person name="Xu T."/>
            <person name="Zheng H."/>
            <person name="Pu S."/>
            <person name="Wang B."/>
            <person name="Gu W."/>
            <person name="Zhang X.L."/>
            <person name="Zhu G.-F."/>
            <person name="Wang S."/>
            <person name="Zhao G.-P."/>
            <person name="Chen H."/>
        </authorList>
    </citation>
    <scope>NUCLEOTIDE SEQUENCE [LARGE SCALE GENOMIC DNA]</scope>
    <source>
        <strain>JL03</strain>
    </source>
</reference>
<gene>
    <name type="ordered locus">APJL_1398</name>
</gene>
<name>Y1398_ACTPJ</name>
<evidence type="ECO:0000255" key="1">
    <source>
        <dbReference type="HAMAP-Rule" id="MF_00634"/>
    </source>
</evidence>